<comment type="catalytic activity">
    <reaction evidence="1">
        <text>beta-D-fructose 1,6-bisphosphate + H2O = beta-D-fructose 6-phosphate + phosphate</text>
        <dbReference type="Rhea" id="RHEA:11064"/>
        <dbReference type="ChEBI" id="CHEBI:15377"/>
        <dbReference type="ChEBI" id="CHEBI:32966"/>
        <dbReference type="ChEBI" id="CHEBI:43474"/>
        <dbReference type="ChEBI" id="CHEBI:57634"/>
        <dbReference type="EC" id="3.1.3.11"/>
    </reaction>
</comment>
<comment type="cofactor">
    <cofactor evidence="1">
        <name>Mg(2+)</name>
        <dbReference type="ChEBI" id="CHEBI:18420"/>
    </cofactor>
    <text evidence="1">Binds 2 magnesium ions per subunit.</text>
</comment>
<comment type="pathway">
    <text evidence="1">Carbohydrate biosynthesis; gluconeogenesis.</text>
</comment>
<comment type="subunit">
    <text evidence="1">Homotetramer.</text>
</comment>
<comment type="subcellular location">
    <subcellularLocation>
        <location evidence="1">Cytoplasm</location>
    </subcellularLocation>
</comment>
<comment type="similarity">
    <text evidence="1">Belongs to the FBPase class 1 family.</text>
</comment>
<reference key="1">
    <citation type="journal article" date="2006" name="BMC Genomics">
        <title>Complete genome sequence of Shigella flexneri 5b and comparison with Shigella flexneri 2a.</title>
        <authorList>
            <person name="Nie H."/>
            <person name="Yang F."/>
            <person name="Zhang X."/>
            <person name="Yang J."/>
            <person name="Chen L."/>
            <person name="Wang J."/>
            <person name="Xiong Z."/>
            <person name="Peng J."/>
            <person name="Sun L."/>
            <person name="Dong J."/>
            <person name="Xue Y."/>
            <person name="Xu X."/>
            <person name="Chen S."/>
            <person name="Yao Z."/>
            <person name="Shen Y."/>
            <person name="Jin Q."/>
        </authorList>
    </citation>
    <scope>NUCLEOTIDE SEQUENCE [LARGE SCALE GENOMIC DNA]</scope>
    <source>
        <strain>8401</strain>
    </source>
</reference>
<gene>
    <name evidence="1" type="primary">fbp</name>
    <name type="ordered locus">SFV_4259</name>
</gene>
<name>F16PA_SHIF8</name>
<dbReference type="EC" id="3.1.3.11" evidence="1"/>
<dbReference type="EMBL" id="CP000266">
    <property type="protein sequence ID" value="ABF06241.1"/>
    <property type="molecule type" value="Genomic_DNA"/>
</dbReference>
<dbReference type="RefSeq" id="WP_000853753.1">
    <property type="nucleotide sequence ID" value="NC_008258.1"/>
</dbReference>
<dbReference type="SMR" id="Q0SXH4"/>
<dbReference type="GeneID" id="86861371"/>
<dbReference type="KEGG" id="sfv:SFV_4259"/>
<dbReference type="HOGENOM" id="CLU_039977_2_2_6"/>
<dbReference type="UniPathway" id="UPA00138"/>
<dbReference type="Proteomes" id="UP000000659">
    <property type="component" value="Chromosome"/>
</dbReference>
<dbReference type="GO" id="GO:0005829">
    <property type="term" value="C:cytosol"/>
    <property type="evidence" value="ECO:0007669"/>
    <property type="project" value="TreeGrafter"/>
</dbReference>
<dbReference type="GO" id="GO:0042132">
    <property type="term" value="F:fructose 1,6-bisphosphate 1-phosphatase activity"/>
    <property type="evidence" value="ECO:0007669"/>
    <property type="project" value="UniProtKB-UniRule"/>
</dbReference>
<dbReference type="GO" id="GO:0000287">
    <property type="term" value="F:magnesium ion binding"/>
    <property type="evidence" value="ECO:0007669"/>
    <property type="project" value="UniProtKB-UniRule"/>
</dbReference>
<dbReference type="GO" id="GO:0030388">
    <property type="term" value="P:fructose 1,6-bisphosphate metabolic process"/>
    <property type="evidence" value="ECO:0007669"/>
    <property type="project" value="TreeGrafter"/>
</dbReference>
<dbReference type="GO" id="GO:0006002">
    <property type="term" value="P:fructose 6-phosphate metabolic process"/>
    <property type="evidence" value="ECO:0007669"/>
    <property type="project" value="TreeGrafter"/>
</dbReference>
<dbReference type="GO" id="GO:0006000">
    <property type="term" value="P:fructose metabolic process"/>
    <property type="evidence" value="ECO:0007669"/>
    <property type="project" value="TreeGrafter"/>
</dbReference>
<dbReference type="GO" id="GO:0006094">
    <property type="term" value="P:gluconeogenesis"/>
    <property type="evidence" value="ECO:0007669"/>
    <property type="project" value="UniProtKB-UniRule"/>
</dbReference>
<dbReference type="GO" id="GO:0005986">
    <property type="term" value="P:sucrose biosynthetic process"/>
    <property type="evidence" value="ECO:0007669"/>
    <property type="project" value="TreeGrafter"/>
</dbReference>
<dbReference type="CDD" id="cd00354">
    <property type="entry name" value="FBPase"/>
    <property type="match status" value="1"/>
</dbReference>
<dbReference type="FunFam" id="3.30.540.10:FF:000002">
    <property type="entry name" value="Fructose-1,6-bisphosphatase class 1"/>
    <property type="match status" value="1"/>
</dbReference>
<dbReference type="FunFam" id="3.40.190.80:FF:000001">
    <property type="entry name" value="Fructose-1,6-bisphosphatase class 1"/>
    <property type="match status" value="1"/>
</dbReference>
<dbReference type="Gene3D" id="3.40.190.80">
    <property type="match status" value="1"/>
</dbReference>
<dbReference type="Gene3D" id="3.30.540.10">
    <property type="entry name" value="Fructose-1,6-Bisphosphatase, subunit A, domain 1"/>
    <property type="match status" value="1"/>
</dbReference>
<dbReference type="HAMAP" id="MF_01855">
    <property type="entry name" value="FBPase_class1"/>
    <property type="match status" value="1"/>
</dbReference>
<dbReference type="InterPro" id="IPR044015">
    <property type="entry name" value="FBPase_C_dom"/>
</dbReference>
<dbReference type="InterPro" id="IPR000146">
    <property type="entry name" value="FBPase_class-1"/>
</dbReference>
<dbReference type="InterPro" id="IPR033391">
    <property type="entry name" value="FBPase_N"/>
</dbReference>
<dbReference type="InterPro" id="IPR028343">
    <property type="entry name" value="FBPtase"/>
</dbReference>
<dbReference type="InterPro" id="IPR020548">
    <property type="entry name" value="Fructose_bisphosphatase_AS"/>
</dbReference>
<dbReference type="NCBIfam" id="NF006778">
    <property type="entry name" value="PRK09293.1-1"/>
    <property type="match status" value="1"/>
</dbReference>
<dbReference type="NCBIfam" id="NF006779">
    <property type="entry name" value="PRK09293.1-3"/>
    <property type="match status" value="1"/>
</dbReference>
<dbReference type="PANTHER" id="PTHR11556">
    <property type="entry name" value="FRUCTOSE-1,6-BISPHOSPHATASE-RELATED"/>
    <property type="match status" value="1"/>
</dbReference>
<dbReference type="PANTHER" id="PTHR11556:SF35">
    <property type="entry name" value="SEDOHEPTULOSE-1,7-BISPHOSPHATASE, CHLOROPLASTIC"/>
    <property type="match status" value="1"/>
</dbReference>
<dbReference type="Pfam" id="PF00316">
    <property type="entry name" value="FBPase"/>
    <property type="match status" value="1"/>
</dbReference>
<dbReference type="Pfam" id="PF18913">
    <property type="entry name" value="FBPase_C"/>
    <property type="match status" value="1"/>
</dbReference>
<dbReference type="PIRSF" id="PIRSF500210">
    <property type="entry name" value="FBPtase"/>
    <property type="match status" value="1"/>
</dbReference>
<dbReference type="PIRSF" id="PIRSF000904">
    <property type="entry name" value="FBPtase_SBPase"/>
    <property type="match status" value="1"/>
</dbReference>
<dbReference type="PRINTS" id="PR00115">
    <property type="entry name" value="F16BPHPHTASE"/>
</dbReference>
<dbReference type="SUPFAM" id="SSF56655">
    <property type="entry name" value="Carbohydrate phosphatase"/>
    <property type="match status" value="1"/>
</dbReference>
<dbReference type="PROSITE" id="PS00124">
    <property type="entry name" value="FBPASE"/>
    <property type="match status" value="1"/>
</dbReference>
<feature type="chain" id="PRO_0000364719" description="Fructose-1,6-bisphosphatase class 1">
    <location>
        <begin position="1"/>
        <end position="332"/>
    </location>
</feature>
<feature type="binding site" evidence="1">
    <location>
        <position position="89"/>
    </location>
    <ligand>
        <name>Mg(2+)</name>
        <dbReference type="ChEBI" id="CHEBI:18420"/>
        <label>1</label>
    </ligand>
</feature>
<feature type="binding site" evidence="1">
    <location>
        <position position="110"/>
    </location>
    <ligand>
        <name>Mg(2+)</name>
        <dbReference type="ChEBI" id="CHEBI:18420"/>
        <label>1</label>
    </ligand>
</feature>
<feature type="binding site" evidence="1">
    <location>
        <position position="110"/>
    </location>
    <ligand>
        <name>Mg(2+)</name>
        <dbReference type="ChEBI" id="CHEBI:18420"/>
        <label>2</label>
    </ligand>
</feature>
<feature type="binding site" evidence="1">
    <location>
        <position position="112"/>
    </location>
    <ligand>
        <name>Mg(2+)</name>
        <dbReference type="ChEBI" id="CHEBI:18420"/>
        <label>1</label>
    </ligand>
</feature>
<feature type="binding site" evidence="1">
    <location>
        <begin position="113"/>
        <end position="116"/>
    </location>
    <ligand>
        <name>substrate</name>
    </ligand>
</feature>
<feature type="binding site" evidence="1">
    <location>
        <position position="113"/>
    </location>
    <ligand>
        <name>Mg(2+)</name>
        <dbReference type="ChEBI" id="CHEBI:18420"/>
        <label>2</label>
    </ligand>
</feature>
<feature type="binding site" evidence="1">
    <location>
        <position position="206"/>
    </location>
    <ligand>
        <name>substrate</name>
    </ligand>
</feature>
<feature type="binding site" evidence="1">
    <location>
        <position position="239"/>
    </location>
    <ligand>
        <name>substrate</name>
    </ligand>
</feature>
<feature type="binding site" evidence="1">
    <location>
        <begin position="257"/>
        <end position="259"/>
    </location>
    <ligand>
        <name>substrate</name>
    </ligand>
</feature>
<feature type="binding site" evidence="1">
    <location>
        <position position="269"/>
    </location>
    <ligand>
        <name>substrate</name>
    </ligand>
</feature>
<feature type="binding site" evidence="1">
    <location>
        <position position="275"/>
    </location>
    <ligand>
        <name>Mg(2+)</name>
        <dbReference type="ChEBI" id="CHEBI:18420"/>
        <label>2</label>
    </ligand>
</feature>
<evidence type="ECO:0000255" key="1">
    <source>
        <dbReference type="HAMAP-Rule" id="MF_01855"/>
    </source>
</evidence>
<proteinExistence type="inferred from homology"/>
<organism>
    <name type="scientific">Shigella flexneri serotype 5b (strain 8401)</name>
    <dbReference type="NCBI Taxonomy" id="373384"/>
    <lineage>
        <taxon>Bacteria</taxon>
        <taxon>Pseudomonadati</taxon>
        <taxon>Pseudomonadota</taxon>
        <taxon>Gammaproteobacteria</taxon>
        <taxon>Enterobacterales</taxon>
        <taxon>Enterobacteriaceae</taxon>
        <taxon>Shigella</taxon>
    </lineage>
</organism>
<sequence>MKTLGEFIVEKQHEFSHATGELTALLSAIKLGAKIIHRDINKAGLVDILGASGAENVQGEVQQKLDLFANEKLKAALKARDIVAGIASEEEDEIVVFEGCEHAKYVVLMDPLDGSSNIDVNVSVGTIFSIYRRVTPVGTPVTEEDFLQPGNKQVAAGYVVYGSSTMLVYTTGCGVHAFTYDPSLGVFCLCQERMRFPEKGKTYSINEGNYIKFPNGVKKYIKFCQEEDKSTNRPYTSRYIGSLVADFHRNLLKGGIYLYPSTASHPDGKLRLLYECNPMAFLAEQAGGKASDGKERILDIIPETLHQRRSFFVGNDHMVEDVERFIREFPDA</sequence>
<accession>Q0SXH4</accession>
<keyword id="KW-0119">Carbohydrate metabolism</keyword>
<keyword id="KW-0963">Cytoplasm</keyword>
<keyword id="KW-0378">Hydrolase</keyword>
<keyword id="KW-0460">Magnesium</keyword>
<keyword id="KW-0479">Metal-binding</keyword>
<protein>
    <recommendedName>
        <fullName evidence="1">Fructose-1,6-bisphosphatase class 1</fullName>
        <shortName evidence="1">FBPase class 1</shortName>
        <ecNumber evidence="1">3.1.3.11</ecNumber>
    </recommendedName>
    <alternativeName>
        <fullName evidence="1">D-fructose-1,6-bisphosphate 1-phosphohydrolase class 1</fullName>
    </alternativeName>
</protein>